<accession>P0DL56</accession>
<accession>D2YZQ4</accession>
<accession>Q8IAE2</accession>
<keyword id="KW-0165">Cleavage on pair of basic residues</keyword>
<keyword id="KW-0204">Cytolysis</keyword>
<keyword id="KW-0406">Ion transport</keyword>
<keyword id="KW-0472">Membrane</keyword>
<keyword id="KW-0166">Nematocyst</keyword>
<keyword id="KW-0964">Secreted</keyword>
<keyword id="KW-0732">Signal</keyword>
<keyword id="KW-1052">Target cell membrane</keyword>
<keyword id="KW-1053">Target membrane</keyword>
<keyword id="KW-0800">Toxin</keyword>
<keyword id="KW-0812">Transmembrane</keyword>
<keyword id="KW-0813">Transport</keyword>
<comment type="function">
    <text>Pore-forming protein that forms cations-selective hydrophilic pores of around 1 nm and causes cytolysis. Pore formation is a multi-step process that involves specific recognition of membrane sphingomyelin (but neither cholesterol nor phosphatidylcholine) using aromatic rich region and adjacent phosphocholine (POC) binding site, firm binding to the membrane (mainly driven by hydrophobic interactions) accompanied by the transfer of the N-terminal region to the lipid-water interface and finally pore formation after oligomerization of monomers.</text>
</comment>
<comment type="subunit">
    <text evidence="1">Octamer or nonamer in membranes. Monomer in the soluble state.</text>
</comment>
<comment type="subcellular location">
    <subcellularLocation>
        <location evidence="1">Secreted</location>
    </subcellularLocation>
    <subcellularLocation>
        <location evidence="2">Nematocyst</location>
    </subcellularLocation>
    <subcellularLocation>
        <location evidence="1">Target cell membrane</location>
    </subcellularLocation>
    <text evidence="1">Forms an alpha-helical membrane channel in the prey.</text>
</comment>
<comment type="domain">
    <text evidence="4">Composed of a long N-terminal alpha-helix and a core region rich in beta-sheet structures. Before the pore formation, the alpha-helix binds the lipid membrane, partitions into the lipid-water interface and stabilizes the monomeric molecule on the membrane. Finally, it traverses the bilayer, thus forming the transmembrane pore.</text>
</comment>
<comment type="similarity">
    <text evidence="7">Belongs to the actinoporin family. Sea anemone subfamily.</text>
</comment>
<sequence length="226" mass="25167">MRHFVVFLYMFLALSIPTAFAKKHIVTKKGNHQDITNDNEGENAEKKSATVAGAVIAGGELALKILTKILYEIGKIDRKIAIGVDNESGLKWTALNTYYKSGASDVTLPYEVENSKALLYTARKSKGPVARGAVGVLAYKMSSGNTLAVMFSVPFDYNLYSNWWNVKIYDGEKKADEKMYNELYNNNNPIKPSTWEKRDLGKDGLKLRGFMTSNGDAKLVIHIEKS</sequence>
<name>ACTP2_PHYSE</name>
<evidence type="ECO:0000250" key="1">
    <source>
        <dbReference type="UniProtKB" id="B9W5G6"/>
    </source>
</evidence>
<evidence type="ECO:0000250" key="2">
    <source>
        <dbReference type="UniProtKB" id="P07845"/>
    </source>
</evidence>
<evidence type="ECO:0000250" key="3">
    <source>
        <dbReference type="UniProtKB" id="P0DL55"/>
    </source>
</evidence>
<evidence type="ECO:0000250" key="4">
    <source>
        <dbReference type="UniProtKB" id="P61914"/>
    </source>
</evidence>
<evidence type="ECO:0000255" key="5"/>
<evidence type="ECO:0000303" key="6">
    <source>
    </source>
</evidence>
<evidence type="ECO:0000305" key="7"/>
<protein>
    <recommendedName>
        <fullName>DELTA-alicitoxin-Pse1b</fullName>
        <shortName>DELTA-ALTX-Pse1b</shortName>
    </recommendedName>
    <alternativeName>
        <fullName evidence="6">Pst-I</fullName>
    </alternativeName>
</protein>
<feature type="signal peptide" evidence="5">
    <location>
        <begin position="1"/>
        <end position="21"/>
    </location>
</feature>
<feature type="propeptide" id="PRO_0000433628" evidence="3">
    <location>
        <begin position="22"/>
        <end position="45"/>
    </location>
</feature>
<feature type="chain" id="PRO_0000433629" description="DELTA-alicitoxin-Pse1b">
    <location>
        <begin position="48"/>
        <end position="226"/>
    </location>
</feature>
<feature type="region of interest" description="Plays an important role in the hemolytic activity" evidence="2">
    <location>
        <begin position="50"/>
        <end position="59"/>
    </location>
</feature>
<feature type="region of interest" description="N-terminal region" evidence="4">
    <location>
        <begin position="58"/>
        <end position="77"/>
    </location>
</feature>
<feature type="region of interest" description="Trp-rich region, which is important for the binding to lipid membrane" evidence="4">
    <location>
        <begin position="152"/>
        <end position="167"/>
    </location>
</feature>
<feature type="binding site" evidence="2">
    <location>
        <position position="101"/>
    </location>
    <ligand>
        <name>phosphocholine</name>
        <dbReference type="ChEBI" id="CHEBI:295975"/>
    </ligand>
</feature>
<feature type="binding site" evidence="2">
    <location>
        <position position="134"/>
    </location>
    <ligand>
        <name>phosphocholine</name>
        <dbReference type="ChEBI" id="CHEBI:295975"/>
    </ligand>
</feature>
<feature type="binding site" evidence="2">
    <location>
        <position position="152"/>
    </location>
    <ligand>
        <name>phosphocholine</name>
        <dbReference type="ChEBI" id="CHEBI:295975"/>
    </ligand>
</feature>
<feature type="binding site" evidence="2">
    <location>
        <position position="154"/>
    </location>
    <ligand>
        <name>phosphocholine</name>
        <dbReference type="ChEBI" id="CHEBI:295975"/>
    </ligand>
</feature>
<feature type="binding site" evidence="2">
    <location>
        <position position="180"/>
    </location>
    <ligand>
        <name>phosphocholine</name>
        <dbReference type="ChEBI" id="CHEBI:295975"/>
    </ligand>
</feature>
<feature type="binding site" evidence="2">
    <location>
        <position position="184"/>
    </location>
    <ligand>
        <name>phosphocholine</name>
        <dbReference type="ChEBI" id="CHEBI:295975"/>
    </ligand>
</feature>
<feature type="site" description="Important in the initial contact with the lipid membrane" evidence="4">
    <location>
        <position position="160"/>
    </location>
</feature>
<reference key="1">
    <citation type="journal article" date="2010" name="Toxicon">
        <title>Molecular characterization on the genome structure of hemolysin toxin isoforms isolated from sea anemone Actineria villosa and Phyllodiscus semoni.</title>
        <authorList>
            <person name="Uechi G."/>
            <person name="Toma H."/>
            <person name="Arakawa T."/>
            <person name="Sato Y."/>
        </authorList>
    </citation>
    <scope>NUCLEOTIDE SEQUENCE [MRNA]</scope>
    <source>
        <tissue>Tentacle</tissue>
    </source>
</reference>
<reference key="2">
    <citation type="journal article" date="2011" name="Toxicon">
        <authorList>
            <person name="Uechi G."/>
            <person name="Toma H."/>
            <person name="Arakawa T."/>
            <person name="Sato Y."/>
        </authorList>
    </citation>
    <scope>ERRATUM OF PUBMED:20837039</scope>
</reference>
<reference key="3">
    <citation type="journal article" date="2009" name="Toxicon">
        <title>Molecular mechanism of pore formation by actinoporins.</title>
        <authorList>
            <person name="Kristan K.C."/>
            <person name="Viero G."/>
            <person name="Dalla Serra M."/>
            <person name="Macek P."/>
            <person name="Anderluh G."/>
        </authorList>
    </citation>
    <scope>REVIEW</scope>
</reference>
<proteinExistence type="evidence at transcript level"/>
<dbReference type="EMBL" id="AB512461">
    <property type="protein sequence ID" value="BAI70365.1"/>
    <property type="molecule type" value="mRNA"/>
</dbReference>
<dbReference type="SMR" id="P0DL56"/>
<dbReference type="GO" id="GO:0005576">
    <property type="term" value="C:extracellular region"/>
    <property type="evidence" value="ECO:0007669"/>
    <property type="project" value="UniProtKB-SubCell"/>
</dbReference>
<dbReference type="GO" id="GO:0042151">
    <property type="term" value="C:nematocyst"/>
    <property type="evidence" value="ECO:0007669"/>
    <property type="project" value="UniProtKB-SubCell"/>
</dbReference>
<dbReference type="GO" id="GO:0044218">
    <property type="term" value="C:other organism cell membrane"/>
    <property type="evidence" value="ECO:0007669"/>
    <property type="project" value="UniProtKB-KW"/>
</dbReference>
<dbReference type="GO" id="GO:0046930">
    <property type="term" value="C:pore complex"/>
    <property type="evidence" value="ECO:0007669"/>
    <property type="project" value="InterPro"/>
</dbReference>
<dbReference type="GO" id="GO:0015267">
    <property type="term" value="F:channel activity"/>
    <property type="evidence" value="ECO:0007669"/>
    <property type="project" value="InterPro"/>
</dbReference>
<dbReference type="GO" id="GO:0090729">
    <property type="term" value="F:toxin activity"/>
    <property type="evidence" value="ECO:0007669"/>
    <property type="project" value="UniProtKB-KW"/>
</dbReference>
<dbReference type="GO" id="GO:0051715">
    <property type="term" value="P:cytolysis in another organism"/>
    <property type="evidence" value="ECO:0007669"/>
    <property type="project" value="InterPro"/>
</dbReference>
<dbReference type="GO" id="GO:0006812">
    <property type="term" value="P:monoatomic cation transport"/>
    <property type="evidence" value="ECO:0007669"/>
    <property type="project" value="InterPro"/>
</dbReference>
<dbReference type="GO" id="GO:0046931">
    <property type="term" value="P:pore complex assembly"/>
    <property type="evidence" value="ECO:0007669"/>
    <property type="project" value="InterPro"/>
</dbReference>
<dbReference type="FunFam" id="2.60.270.20:FF:000001">
    <property type="entry name" value="DELTA-actitoxin-Afr1a"/>
    <property type="match status" value="1"/>
</dbReference>
<dbReference type="Gene3D" id="2.60.270.20">
    <property type="entry name" value="Cytolysin/lectin"/>
    <property type="match status" value="1"/>
</dbReference>
<dbReference type="InterPro" id="IPR050677">
    <property type="entry name" value="Actinoporin_PFT"/>
</dbReference>
<dbReference type="InterPro" id="IPR009104">
    <property type="entry name" value="Anemon_actinoporin-like"/>
</dbReference>
<dbReference type="InterPro" id="IPR015926">
    <property type="entry name" value="Cytolysin/lectin"/>
</dbReference>
<dbReference type="PANTHER" id="PTHR40388">
    <property type="entry name" value="BRYOPORIN"/>
    <property type="match status" value="1"/>
</dbReference>
<dbReference type="PANTHER" id="PTHR40388:SF1">
    <property type="entry name" value="BRYOPORIN"/>
    <property type="match status" value="1"/>
</dbReference>
<dbReference type="Pfam" id="PF06369">
    <property type="entry name" value="Anemone_cytotox"/>
    <property type="match status" value="1"/>
</dbReference>
<dbReference type="SUPFAM" id="SSF63724">
    <property type="entry name" value="Cytolysin/lectin"/>
    <property type="match status" value="1"/>
</dbReference>
<organism>
    <name type="scientific">Phyllodiscus semoni</name>
    <name type="common">Night anemone</name>
    <dbReference type="NCBI Taxonomy" id="163701"/>
    <lineage>
        <taxon>Eukaryota</taxon>
        <taxon>Metazoa</taxon>
        <taxon>Cnidaria</taxon>
        <taxon>Anthozoa</taxon>
        <taxon>Hexacorallia</taxon>
        <taxon>Actiniaria</taxon>
        <taxon>Nynantheae</taxon>
        <taxon>Aliciidae</taxon>
        <taxon>Phyllodiscus</taxon>
    </lineage>
</organism>